<protein>
    <recommendedName>
        <fullName evidence="1">Sulfite reductase [NADPH] flavoprotein alpha-component</fullName>
        <shortName evidence="1">SiR-FP</shortName>
        <ecNumber evidence="1">1.8.1.2</ecNumber>
    </recommendedName>
</protein>
<comment type="function">
    <text evidence="1">Component of the sulfite reductase complex that catalyzes the 6-electron reduction of sulfite to sulfide. This is one of several activities required for the biosynthesis of L-cysteine from sulfate. The flavoprotein component catalyzes the electron flow from NADPH -&gt; FAD -&gt; FMN to the hemoprotein component.</text>
</comment>
<comment type="catalytic activity">
    <reaction evidence="1">
        <text>hydrogen sulfide + 3 NADP(+) + 3 H2O = sulfite + 3 NADPH + 4 H(+)</text>
        <dbReference type="Rhea" id="RHEA:13801"/>
        <dbReference type="ChEBI" id="CHEBI:15377"/>
        <dbReference type="ChEBI" id="CHEBI:15378"/>
        <dbReference type="ChEBI" id="CHEBI:17359"/>
        <dbReference type="ChEBI" id="CHEBI:29919"/>
        <dbReference type="ChEBI" id="CHEBI:57783"/>
        <dbReference type="ChEBI" id="CHEBI:58349"/>
        <dbReference type="EC" id="1.8.1.2"/>
    </reaction>
</comment>
<comment type="cofactor">
    <cofactor evidence="1">
        <name>FAD</name>
        <dbReference type="ChEBI" id="CHEBI:57692"/>
    </cofactor>
    <text evidence="1">Binds 1 FAD per subunit.</text>
</comment>
<comment type="cofactor">
    <cofactor evidence="1">
        <name>FMN</name>
        <dbReference type="ChEBI" id="CHEBI:58210"/>
    </cofactor>
    <text evidence="1">Binds 1 FMN per subunit.</text>
</comment>
<comment type="pathway">
    <text evidence="1">Sulfur metabolism; hydrogen sulfide biosynthesis; hydrogen sulfide from sulfite (NADPH route): step 1/1.</text>
</comment>
<comment type="subunit">
    <text evidence="1">Alpha(8)-beta(8). The alpha component is a flavoprotein, the beta component is a hemoprotein.</text>
</comment>
<comment type="similarity">
    <text evidence="1">Belongs to the NADPH-dependent sulphite reductase flavoprotein subunit CysJ family.</text>
</comment>
<comment type="similarity">
    <text evidence="1">In the N-terminal section; belongs to the flavodoxin family.</text>
</comment>
<comment type="similarity">
    <text evidence="1">In the C-terminal section; belongs to the flavoprotein pyridine nucleotide cytochrome reductase family.</text>
</comment>
<accession>A4TPY5</accession>
<gene>
    <name evidence="1" type="primary">cysJ</name>
    <name type="ordered locus">YPDSF_2987</name>
</gene>
<sequence length="612" mass="67283">MTTQAPPTSLLPLSPEQLARLQAAVGEFSPTQMAWLSGYFWGMVNQQPGAVASPAVAAPPPVTVTLISASQTGNARRLAEQLRDDLLAAQLSVNLVNAGDYKFKQIAQERLLVVVASTQGEGEPAEEAVALHKFLFSKKAPKLSETAFAVFGLGDTSYEHFCQAGKDFDSKLAELGAQRLLDRVDADVEYQVQAQQWRQQVVATLQAKVPAQSTAPTQFIAPTQSTTPAAAAITSGGTTTVSPYSKTAPLTAQLSVQQKVTGRNSEKDVRHIEIDLGDSGLRYQPGDALGVWFDNDPALVEELLALLWLKGDEPVSIDGQNMPLAQALLSHLELTQNTTLIVDKYAALSRDETLIALLADKPALQLYAKNTPFVDMVRQAPSDLNADQLVGLLRPLTPRLYSIASSQAETENEVHITVGVVRYDIDGRARSGGASGYLADRLEVDGDIRVFIEHNDNFRLPANPETPVIMIGPGTGIAPFRAFMQQREVDGASGKNWLFFGNPHFTEDFLYQVEWQRYVKEGVLTRIDLAWSRDQAHKIYVQDKLREQGAELWNWIQQGAHIYVCGDANRMAKDVEQVLLDVVALHGAMDAEQADEYLSELRQARRYQRDVY</sequence>
<organism>
    <name type="scientific">Yersinia pestis (strain Pestoides F)</name>
    <dbReference type="NCBI Taxonomy" id="386656"/>
    <lineage>
        <taxon>Bacteria</taxon>
        <taxon>Pseudomonadati</taxon>
        <taxon>Pseudomonadota</taxon>
        <taxon>Gammaproteobacteria</taxon>
        <taxon>Enterobacterales</taxon>
        <taxon>Yersiniaceae</taxon>
        <taxon>Yersinia</taxon>
    </lineage>
</organism>
<proteinExistence type="inferred from homology"/>
<evidence type="ECO:0000255" key="1">
    <source>
        <dbReference type="HAMAP-Rule" id="MF_01541"/>
    </source>
</evidence>
<dbReference type="EC" id="1.8.1.2" evidence="1"/>
<dbReference type="EMBL" id="CP000668">
    <property type="protein sequence ID" value="ABP41347.1"/>
    <property type="molecule type" value="Genomic_DNA"/>
</dbReference>
<dbReference type="RefSeq" id="WP_002223202.1">
    <property type="nucleotide sequence ID" value="NZ_CP009715.1"/>
</dbReference>
<dbReference type="SMR" id="A4TPY5"/>
<dbReference type="KEGG" id="ypp:YPDSF_2987"/>
<dbReference type="PATRIC" id="fig|386656.14.peg.1377"/>
<dbReference type="UniPathway" id="UPA00140">
    <property type="reaction ID" value="UER00207"/>
</dbReference>
<dbReference type="GO" id="GO:0005829">
    <property type="term" value="C:cytosol"/>
    <property type="evidence" value="ECO:0007669"/>
    <property type="project" value="TreeGrafter"/>
</dbReference>
<dbReference type="GO" id="GO:0050660">
    <property type="term" value="F:flavin adenine dinucleotide binding"/>
    <property type="evidence" value="ECO:0007669"/>
    <property type="project" value="InterPro"/>
</dbReference>
<dbReference type="GO" id="GO:0010181">
    <property type="term" value="F:FMN binding"/>
    <property type="evidence" value="ECO:0007669"/>
    <property type="project" value="InterPro"/>
</dbReference>
<dbReference type="GO" id="GO:0004783">
    <property type="term" value="F:sulfite reductase (NADPH) activity"/>
    <property type="evidence" value="ECO:0007669"/>
    <property type="project" value="UniProtKB-UniRule"/>
</dbReference>
<dbReference type="GO" id="GO:0019344">
    <property type="term" value="P:cysteine biosynthetic process"/>
    <property type="evidence" value="ECO:0007669"/>
    <property type="project" value="UniProtKB-KW"/>
</dbReference>
<dbReference type="GO" id="GO:0070814">
    <property type="term" value="P:hydrogen sulfide biosynthetic process"/>
    <property type="evidence" value="ECO:0007669"/>
    <property type="project" value="UniProtKB-UniRule"/>
</dbReference>
<dbReference type="GO" id="GO:0000103">
    <property type="term" value="P:sulfate assimilation"/>
    <property type="evidence" value="ECO:0007669"/>
    <property type="project" value="UniProtKB-UniRule"/>
</dbReference>
<dbReference type="CDD" id="cd06199">
    <property type="entry name" value="SiR"/>
    <property type="match status" value="1"/>
</dbReference>
<dbReference type="FunFam" id="3.40.50.80:FF:000001">
    <property type="entry name" value="NADPH--cytochrome P450 reductase 1"/>
    <property type="match status" value="1"/>
</dbReference>
<dbReference type="FunFam" id="1.20.990.10:FF:000004">
    <property type="entry name" value="Sulfite reductase [NADPH] flavoprotein alpha-component"/>
    <property type="match status" value="1"/>
</dbReference>
<dbReference type="FunFam" id="3.40.50.360:FF:000018">
    <property type="entry name" value="Sulfite reductase [NADPH] flavoprotein alpha-component"/>
    <property type="match status" value="1"/>
</dbReference>
<dbReference type="Gene3D" id="3.40.50.360">
    <property type="match status" value="1"/>
</dbReference>
<dbReference type="Gene3D" id="1.20.990.10">
    <property type="entry name" value="NADPH-cytochrome p450 Reductase, Chain A, domain 3"/>
    <property type="match status" value="1"/>
</dbReference>
<dbReference type="Gene3D" id="3.40.50.80">
    <property type="entry name" value="Nucleotide-binding domain of ferredoxin-NADP reductase (FNR) module"/>
    <property type="match status" value="1"/>
</dbReference>
<dbReference type="Gene3D" id="2.40.30.10">
    <property type="entry name" value="Translation factors"/>
    <property type="match status" value="1"/>
</dbReference>
<dbReference type="HAMAP" id="MF_01541">
    <property type="entry name" value="CysJ"/>
    <property type="match status" value="1"/>
</dbReference>
<dbReference type="InterPro" id="IPR010199">
    <property type="entry name" value="CysJ"/>
</dbReference>
<dbReference type="InterPro" id="IPR003097">
    <property type="entry name" value="CysJ-like_FAD-binding"/>
</dbReference>
<dbReference type="InterPro" id="IPR029758">
    <property type="entry name" value="CysJ_Proteobact"/>
</dbReference>
<dbReference type="InterPro" id="IPR017927">
    <property type="entry name" value="FAD-bd_FR_type"/>
</dbReference>
<dbReference type="InterPro" id="IPR001094">
    <property type="entry name" value="Flavdoxin-like"/>
</dbReference>
<dbReference type="InterPro" id="IPR008254">
    <property type="entry name" value="Flavodoxin/NO_synth"/>
</dbReference>
<dbReference type="InterPro" id="IPR001709">
    <property type="entry name" value="Flavoprot_Pyr_Nucl_cyt_Rdtase"/>
</dbReference>
<dbReference type="InterPro" id="IPR029039">
    <property type="entry name" value="Flavoprotein-like_sf"/>
</dbReference>
<dbReference type="InterPro" id="IPR039261">
    <property type="entry name" value="FNR_nucleotide-bd"/>
</dbReference>
<dbReference type="InterPro" id="IPR023173">
    <property type="entry name" value="NADPH_Cyt_P450_Rdtase_alpha"/>
</dbReference>
<dbReference type="InterPro" id="IPR001433">
    <property type="entry name" value="OxRdtase_FAD/NAD-bd"/>
</dbReference>
<dbReference type="InterPro" id="IPR017938">
    <property type="entry name" value="Riboflavin_synthase-like_b-brl"/>
</dbReference>
<dbReference type="NCBIfam" id="TIGR01931">
    <property type="entry name" value="cysJ"/>
    <property type="match status" value="1"/>
</dbReference>
<dbReference type="NCBIfam" id="NF008197">
    <property type="entry name" value="PRK10953.1"/>
    <property type="match status" value="1"/>
</dbReference>
<dbReference type="PANTHER" id="PTHR19384:SF128">
    <property type="entry name" value="NADPH OXIDOREDUCTASE A"/>
    <property type="match status" value="1"/>
</dbReference>
<dbReference type="PANTHER" id="PTHR19384">
    <property type="entry name" value="NITRIC OXIDE SYNTHASE-RELATED"/>
    <property type="match status" value="1"/>
</dbReference>
<dbReference type="Pfam" id="PF00667">
    <property type="entry name" value="FAD_binding_1"/>
    <property type="match status" value="1"/>
</dbReference>
<dbReference type="Pfam" id="PF00258">
    <property type="entry name" value="Flavodoxin_1"/>
    <property type="match status" value="1"/>
</dbReference>
<dbReference type="Pfam" id="PF00175">
    <property type="entry name" value="NAD_binding_1"/>
    <property type="match status" value="1"/>
</dbReference>
<dbReference type="PIRSF" id="PIRSF000207">
    <property type="entry name" value="SiR-FP_CysJ"/>
    <property type="match status" value="1"/>
</dbReference>
<dbReference type="PRINTS" id="PR00369">
    <property type="entry name" value="FLAVODOXIN"/>
</dbReference>
<dbReference type="PRINTS" id="PR00371">
    <property type="entry name" value="FPNCR"/>
</dbReference>
<dbReference type="SUPFAM" id="SSF52343">
    <property type="entry name" value="Ferredoxin reductase-like, C-terminal NADP-linked domain"/>
    <property type="match status" value="1"/>
</dbReference>
<dbReference type="SUPFAM" id="SSF52218">
    <property type="entry name" value="Flavoproteins"/>
    <property type="match status" value="1"/>
</dbReference>
<dbReference type="SUPFAM" id="SSF63380">
    <property type="entry name" value="Riboflavin synthase domain-like"/>
    <property type="match status" value="1"/>
</dbReference>
<dbReference type="PROSITE" id="PS51384">
    <property type="entry name" value="FAD_FR"/>
    <property type="match status" value="1"/>
</dbReference>
<dbReference type="PROSITE" id="PS50902">
    <property type="entry name" value="FLAVODOXIN_LIKE"/>
    <property type="match status" value="1"/>
</dbReference>
<keyword id="KW-0028">Amino-acid biosynthesis</keyword>
<keyword id="KW-0198">Cysteine biosynthesis</keyword>
<keyword id="KW-0249">Electron transport</keyword>
<keyword id="KW-0274">FAD</keyword>
<keyword id="KW-0285">Flavoprotein</keyword>
<keyword id="KW-0288">FMN</keyword>
<keyword id="KW-0521">NADP</keyword>
<keyword id="KW-0560">Oxidoreductase</keyword>
<keyword id="KW-0813">Transport</keyword>
<feature type="chain" id="PRO_1000087644" description="Sulfite reductase [NADPH] flavoprotein alpha-component">
    <location>
        <begin position="1"/>
        <end position="612"/>
    </location>
</feature>
<feature type="domain" description="Flavodoxin-like" evidence="1">
    <location>
        <begin position="64"/>
        <end position="202"/>
    </location>
</feature>
<feature type="domain" description="FAD-binding FR-type" evidence="1">
    <location>
        <begin position="247"/>
        <end position="461"/>
    </location>
</feature>
<feature type="binding site" evidence="1">
    <location>
        <begin position="70"/>
        <end position="75"/>
    </location>
    <ligand>
        <name>FMN</name>
        <dbReference type="ChEBI" id="CHEBI:58210"/>
    </ligand>
</feature>
<feature type="binding site" evidence="1">
    <location>
        <begin position="117"/>
        <end position="120"/>
    </location>
    <ligand>
        <name>FMN</name>
        <dbReference type="ChEBI" id="CHEBI:58210"/>
    </ligand>
</feature>
<feature type="binding site" evidence="1">
    <location>
        <begin position="153"/>
        <end position="162"/>
    </location>
    <ligand>
        <name>FMN</name>
        <dbReference type="ChEBI" id="CHEBI:58210"/>
    </ligand>
</feature>
<feature type="binding site" evidence="1">
    <location>
        <position position="335"/>
    </location>
    <ligand>
        <name>FAD</name>
        <dbReference type="ChEBI" id="CHEBI:57692"/>
    </ligand>
</feature>
<feature type="binding site" evidence="1">
    <location>
        <position position="369"/>
    </location>
    <ligand>
        <name>FAD</name>
        <dbReference type="ChEBI" id="CHEBI:57692"/>
    </ligand>
</feature>
<feature type="binding site" evidence="1">
    <location>
        <begin position="399"/>
        <end position="402"/>
    </location>
    <ligand>
        <name>FAD</name>
        <dbReference type="ChEBI" id="CHEBI:57692"/>
    </ligand>
</feature>
<feature type="binding site" evidence="1">
    <location>
        <begin position="417"/>
        <end position="419"/>
    </location>
    <ligand>
        <name>FAD</name>
        <dbReference type="ChEBI" id="CHEBI:57692"/>
    </ligand>
</feature>
<feature type="binding site" evidence="1">
    <location>
        <position position="423"/>
    </location>
    <ligand>
        <name>FAD</name>
        <dbReference type="ChEBI" id="CHEBI:57692"/>
    </ligand>
</feature>
<feature type="binding site" evidence="1">
    <location>
        <begin position="432"/>
        <end position="435"/>
    </location>
    <ligand>
        <name>FAD</name>
        <dbReference type="ChEBI" id="CHEBI:57692"/>
    </ligand>
</feature>
<feature type="binding site" evidence="1">
    <location>
        <begin position="532"/>
        <end position="533"/>
    </location>
    <ligand>
        <name>NADP(+)</name>
        <dbReference type="ChEBI" id="CHEBI:58349"/>
    </ligand>
</feature>
<feature type="binding site" evidence="1">
    <location>
        <begin position="538"/>
        <end position="542"/>
    </location>
    <ligand>
        <name>NADP(+)</name>
        <dbReference type="ChEBI" id="CHEBI:58349"/>
    </ligand>
</feature>
<feature type="binding site" evidence="1">
    <location>
        <position position="574"/>
    </location>
    <ligand>
        <name>NADP(+)</name>
        <dbReference type="ChEBI" id="CHEBI:58349"/>
    </ligand>
</feature>
<feature type="binding site" evidence="1">
    <location>
        <position position="612"/>
    </location>
    <ligand>
        <name>FAD</name>
        <dbReference type="ChEBI" id="CHEBI:57692"/>
    </ligand>
</feature>
<name>CYSJ_YERPP</name>
<reference key="1">
    <citation type="submission" date="2007-02" db="EMBL/GenBank/DDBJ databases">
        <title>Complete sequence of chromosome of Yersinia pestis Pestoides F.</title>
        <authorList>
            <consortium name="US DOE Joint Genome Institute"/>
            <person name="Copeland A."/>
            <person name="Lucas S."/>
            <person name="Lapidus A."/>
            <person name="Barry K."/>
            <person name="Detter J.C."/>
            <person name="Glavina del Rio T."/>
            <person name="Hammon N."/>
            <person name="Israni S."/>
            <person name="Dalin E."/>
            <person name="Tice H."/>
            <person name="Pitluck S."/>
            <person name="Di Bartolo G."/>
            <person name="Chain P."/>
            <person name="Malfatti S."/>
            <person name="Shin M."/>
            <person name="Vergez L."/>
            <person name="Schmutz J."/>
            <person name="Larimer F."/>
            <person name="Land M."/>
            <person name="Hauser L."/>
            <person name="Worsham P."/>
            <person name="Chu M."/>
            <person name="Bearden S."/>
            <person name="Garcia E."/>
            <person name="Richardson P."/>
        </authorList>
    </citation>
    <scope>NUCLEOTIDE SEQUENCE [LARGE SCALE GENOMIC DNA]</scope>
    <source>
        <strain>Pestoides F</strain>
    </source>
</reference>